<protein>
    <recommendedName>
        <fullName evidence="11">NACHT, LRR and PYD domains-containing protein 6</fullName>
    </recommendedName>
    <alternativeName>
        <fullName evidence="10">Angiotensin II/vasopressin receptor</fullName>
    </alternativeName>
    <alternativeName>
        <fullName evidence="10">Non-angiotensin-vasopressin receptor</fullName>
        <shortName evidence="10">Non-AVR</shortName>
    </alternativeName>
    <alternativeName>
        <fullName>PYRIN-containing APAF1-like protein 5-like</fullName>
    </alternativeName>
</protein>
<dbReference type="EMBL" id="DQ631800">
    <property type="protein sequence ID" value="ABG66707.1"/>
    <property type="molecule type" value="mRNA"/>
</dbReference>
<dbReference type="EMBL" id="AABR07006017">
    <property type="status" value="NOT_ANNOTATED_CDS"/>
    <property type="molecule type" value="Genomic_DNA"/>
</dbReference>
<dbReference type="EMBL" id="AABR07006018">
    <property type="status" value="NOT_ANNOTATED_CDS"/>
    <property type="molecule type" value="Genomic_DNA"/>
</dbReference>
<dbReference type="EMBL" id="M85183">
    <property type="protein sequence ID" value="AAA03623.1"/>
    <property type="status" value="ALT_INIT"/>
    <property type="molecule type" value="mRNA"/>
</dbReference>
<dbReference type="PIR" id="S27880">
    <property type="entry name" value="S27880"/>
</dbReference>
<dbReference type="RefSeq" id="NP_599202.2">
    <property type="nucleotide sequence ID" value="NM_134375.3"/>
</dbReference>
<dbReference type="SMR" id="Q63035"/>
<dbReference type="FunCoup" id="Q63035">
    <property type="interactions" value="151"/>
</dbReference>
<dbReference type="STRING" id="10116.ENSRNOP00000019808"/>
<dbReference type="GlyGen" id="Q63035">
    <property type="glycosylation" value="1 site"/>
</dbReference>
<dbReference type="iPTMnet" id="Q63035"/>
<dbReference type="PhosphoSitePlus" id="Q63035"/>
<dbReference type="PaxDb" id="10116-ENSRNOP00000019808"/>
<dbReference type="GeneID" id="171390"/>
<dbReference type="KEGG" id="rno:171390"/>
<dbReference type="UCSC" id="RGD:708549">
    <molecule id="Q63035-1"/>
    <property type="organism name" value="rat"/>
</dbReference>
<dbReference type="AGR" id="RGD:708549"/>
<dbReference type="CTD" id="171389"/>
<dbReference type="RGD" id="708549">
    <property type="gene designation" value="Nlrp6"/>
</dbReference>
<dbReference type="VEuPathDB" id="HostDB:ENSRNOG00000045677"/>
<dbReference type="eggNOG" id="ENOG502SANB">
    <property type="taxonomic scope" value="Eukaryota"/>
</dbReference>
<dbReference type="InParanoid" id="Q63035"/>
<dbReference type="PRO" id="PR:Q63035"/>
<dbReference type="Proteomes" id="UP000002494">
    <property type="component" value="Chromosome 1"/>
</dbReference>
<dbReference type="Bgee" id="ENSRNOG00000045677">
    <property type="expression patterns" value="Expressed in jejunum and 7 other cell types or tissues"/>
</dbReference>
<dbReference type="GO" id="GO:0061702">
    <property type="term" value="C:canonical inflammasome complex"/>
    <property type="evidence" value="ECO:0000266"/>
    <property type="project" value="RGD"/>
</dbReference>
<dbReference type="GO" id="GO:0005737">
    <property type="term" value="C:cytoplasm"/>
    <property type="evidence" value="ECO:0000318"/>
    <property type="project" value="GO_Central"/>
</dbReference>
<dbReference type="GO" id="GO:0005829">
    <property type="term" value="C:cytosol"/>
    <property type="evidence" value="ECO:0000250"/>
    <property type="project" value="UniProtKB"/>
</dbReference>
<dbReference type="GO" id="GO:0043228">
    <property type="term" value="C:membraneless organelle"/>
    <property type="evidence" value="ECO:0000250"/>
    <property type="project" value="UniProtKB"/>
</dbReference>
<dbReference type="GO" id="GO:0140738">
    <property type="term" value="C:NLRP6 inflammasome complex"/>
    <property type="evidence" value="ECO:0000250"/>
    <property type="project" value="UniProtKB"/>
</dbReference>
<dbReference type="GO" id="GO:0031965">
    <property type="term" value="C:nuclear membrane"/>
    <property type="evidence" value="ECO:0007669"/>
    <property type="project" value="UniProtKB-SubCell"/>
</dbReference>
<dbReference type="GO" id="GO:0005886">
    <property type="term" value="C:plasma membrane"/>
    <property type="evidence" value="ECO:0007669"/>
    <property type="project" value="UniProtKB-SubCell"/>
</dbReference>
<dbReference type="GO" id="GO:0005524">
    <property type="term" value="F:ATP binding"/>
    <property type="evidence" value="ECO:0007669"/>
    <property type="project" value="UniProtKB-KW"/>
</dbReference>
<dbReference type="GO" id="GO:0003725">
    <property type="term" value="F:double-stranded RNA binding"/>
    <property type="evidence" value="ECO:0000250"/>
    <property type="project" value="UniProtKB"/>
</dbReference>
<dbReference type="GO" id="GO:0001530">
    <property type="term" value="F:lipopolysaccharide binding"/>
    <property type="evidence" value="ECO:0000250"/>
    <property type="project" value="UniProtKB"/>
</dbReference>
<dbReference type="GO" id="GO:0070891">
    <property type="term" value="F:lipoteichoic acid binding"/>
    <property type="evidence" value="ECO:0000250"/>
    <property type="project" value="UniProtKB"/>
</dbReference>
<dbReference type="GO" id="GO:0140693">
    <property type="term" value="F:molecular condensate scaffold activity"/>
    <property type="evidence" value="ECO:0000250"/>
    <property type="project" value="UniProtKB"/>
</dbReference>
<dbReference type="GO" id="GO:0038187">
    <property type="term" value="F:pattern recognition receptor activity"/>
    <property type="evidence" value="ECO:0000250"/>
    <property type="project" value="UniProtKB"/>
</dbReference>
<dbReference type="GO" id="GO:0042277">
    <property type="term" value="F:peptide binding"/>
    <property type="evidence" value="ECO:0000315"/>
    <property type="project" value="RGD"/>
</dbReference>
<dbReference type="GO" id="GO:0035591">
    <property type="term" value="F:signaling adaptor activity"/>
    <property type="evidence" value="ECO:0000266"/>
    <property type="project" value="RGD"/>
</dbReference>
<dbReference type="GO" id="GO:0005000">
    <property type="term" value="F:vasopressin receptor activity"/>
    <property type="evidence" value="ECO:0000314"/>
    <property type="project" value="UniProtKB"/>
</dbReference>
<dbReference type="GO" id="GO:0002526">
    <property type="term" value="P:acute inflammatory response"/>
    <property type="evidence" value="ECO:0000266"/>
    <property type="project" value="RGD"/>
</dbReference>
<dbReference type="GO" id="GO:0002438">
    <property type="term" value="P:acute inflammatory response to antigenic stimulus"/>
    <property type="evidence" value="ECO:0000266"/>
    <property type="project" value="RGD"/>
</dbReference>
<dbReference type="GO" id="GO:0140374">
    <property type="term" value="P:antiviral innate immune response"/>
    <property type="evidence" value="ECO:0000250"/>
    <property type="project" value="UniProtKB"/>
</dbReference>
<dbReference type="GO" id="GO:0050830">
    <property type="term" value="P:defense response to Gram-positive bacterium"/>
    <property type="evidence" value="ECO:0000250"/>
    <property type="project" value="UniProtKB"/>
</dbReference>
<dbReference type="GO" id="GO:0051607">
    <property type="term" value="P:defense response to virus"/>
    <property type="evidence" value="ECO:0000250"/>
    <property type="project" value="UniProtKB"/>
</dbReference>
<dbReference type="GO" id="GO:0048874">
    <property type="term" value="P:host-mediated regulation of intestinal microbiota composition"/>
    <property type="evidence" value="ECO:0000266"/>
    <property type="project" value="RGD"/>
</dbReference>
<dbReference type="GO" id="GO:0070266">
    <property type="term" value="P:necroptotic process"/>
    <property type="evidence" value="ECO:0000266"/>
    <property type="project" value="RGD"/>
</dbReference>
<dbReference type="GO" id="GO:0043124">
    <property type="term" value="P:negative regulation of canonical NF-kappaB signal transduction"/>
    <property type="evidence" value="ECO:0000266"/>
    <property type="project" value="RGD"/>
</dbReference>
<dbReference type="GO" id="GO:0070373">
    <property type="term" value="P:negative regulation of ERK1 and ERK2 cascade"/>
    <property type="evidence" value="ECO:0000266"/>
    <property type="project" value="RGD"/>
</dbReference>
<dbReference type="GO" id="GO:0050777">
    <property type="term" value="P:negative regulation of immune response"/>
    <property type="evidence" value="ECO:0000266"/>
    <property type="project" value="RGD"/>
</dbReference>
<dbReference type="GO" id="GO:0002862">
    <property type="term" value="P:negative regulation of inflammatory response to antigenic stimulus"/>
    <property type="evidence" value="ECO:0000266"/>
    <property type="project" value="RGD"/>
</dbReference>
<dbReference type="GO" id="GO:0043409">
    <property type="term" value="P:negative regulation of MAPK cascade"/>
    <property type="evidence" value="ECO:0000266"/>
    <property type="project" value="RGD"/>
</dbReference>
<dbReference type="GO" id="GO:0034122">
    <property type="term" value="P:negative regulation of toll-like receptor signaling pathway"/>
    <property type="evidence" value="ECO:0000266"/>
    <property type="project" value="RGD"/>
</dbReference>
<dbReference type="GO" id="GO:0032689">
    <property type="term" value="P:negative regulation of type II interferon production"/>
    <property type="evidence" value="ECO:0000266"/>
    <property type="project" value="RGD"/>
</dbReference>
<dbReference type="GO" id="GO:0070946">
    <property type="term" value="P:neutrophil-mediated killing of gram-positive bacterium"/>
    <property type="evidence" value="ECO:0000266"/>
    <property type="project" value="RGD"/>
</dbReference>
<dbReference type="GO" id="GO:0140739">
    <property type="term" value="P:NLRP6 inflammasome complex assembly"/>
    <property type="evidence" value="ECO:0000250"/>
    <property type="project" value="UniProtKB"/>
</dbReference>
<dbReference type="GO" id="GO:0050729">
    <property type="term" value="P:positive regulation of inflammatory response"/>
    <property type="evidence" value="ECO:0000250"/>
    <property type="project" value="UniProtKB"/>
</dbReference>
<dbReference type="GO" id="GO:2000494">
    <property type="term" value="P:positive regulation of interleukin-18-mediated signaling pathway"/>
    <property type="evidence" value="ECO:0000250"/>
    <property type="project" value="UniProtKB"/>
</dbReference>
<dbReference type="GO" id="GO:0051260">
    <property type="term" value="P:protein homooligomerization"/>
    <property type="evidence" value="ECO:0000250"/>
    <property type="project" value="UniProtKB"/>
</dbReference>
<dbReference type="GO" id="GO:0070269">
    <property type="term" value="P:pyroptotic inflammatory response"/>
    <property type="evidence" value="ECO:0000266"/>
    <property type="project" value="RGD"/>
</dbReference>
<dbReference type="GO" id="GO:0010506">
    <property type="term" value="P:regulation of autophagy"/>
    <property type="evidence" value="ECO:0000266"/>
    <property type="project" value="RGD"/>
</dbReference>
<dbReference type="GO" id="GO:0050727">
    <property type="term" value="P:regulation of inflammatory response"/>
    <property type="evidence" value="ECO:0000250"/>
    <property type="project" value="UniProtKB"/>
</dbReference>
<dbReference type="GO" id="GO:0070255">
    <property type="term" value="P:regulation of mucus secretion"/>
    <property type="evidence" value="ECO:0000266"/>
    <property type="project" value="RGD"/>
</dbReference>
<dbReference type="GO" id="GO:0009617">
    <property type="term" value="P:response to bacterium"/>
    <property type="evidence" value="ECO:0000266"/>
    <property type="project" value="RGD"/>
</dbReference>
<dbReference type="GO" id="GO:0042060">
    <property type="term" value="P:wound healing"/>
    <property type="evidence" value="ECO:0000266"/>
    <property type="project" value="RGD"/>
</dbReference>
<dbReference type="CDD" id="cd08321">
    <property type="entry name" value="Pyrin_ASC-like"/>
    <property type="match status" value="1"/>
</dbReference>
<dbReference type="FunFam" id="1.10.533.10:FF:000069">
    <property type="entry name" value="NACHT, LRR and PYD domains-containing protein 6"/>
    <property type="match status" value="1"/>
</dbReference>
<dbReference type="FunFam" id="3.80.10.10:FF:001093">
    <property type="entry name" value="NACHT, LRR and PYD domains-containing protein 6"/>
    <property type="match status" value="1"/>
</dbReference>
<dbReference type="FunFam" id="3.40.50.300:FF:001349">
    <property type="entry name" value="NLR family pyrin domain containing 6"/>
    <property type="match status" value="1"/>
</dbReference>
<dbReference type="Gene3D" id="1.10.533.10">
    <property type="entry name" value="Death Domain, Fas"/>
    <property type="match status" value="1"/>
</dbReference>
<dbReference type="Gene3D" id="3.40.50.300">
    <property type="entry name" value="P-loop containing nucleotide triphosphate hydrolases"/>
    <property type="match status" value="1"/>
</dbReference>
<dbReference type="Gene3D" id="3.80.10.10">
    <property type="entry name" value="Ribonuclease Inhibitor"/>
    <property type="match status" value="1"/>
</dbReference>
<dbReference type="InterPro" id="IPR004020">
    <property type="entry name" value="DAPIN"/>
</dbReference>
<dbReference type="InterPro" id="IPR011029">
    <property type="entry name" value="DEATH-like_dom_sf"/>
</dbReference>
<dbReference type="InterPro" id="IPR032675">
    <property type="entry name" value="LRR_dom_sf"/>
</dbReference>
<dbReference type="InterPro" id="IPR007111">
    <property type="entry name" value="NACHT_NTPase"/>
</dbReference>
<dbReference type="InterPro" id="IPR041267">
    <property type="entry name" value="NLRP_HD2"/>
</dbReference>
<dbReference type="InterPro" id="IPR050637">
    <property type="entry name" value="NLRP_innate_immun_reg"/>
</dbReference>
<dbReference type="InterPro" id="IPR041075">
    <property type="entry name" value="NOD1/2_WH"/>
</dbReference>
<dbReference type="InterPro" id="IPR027417">
    <property type="entry name" value="P-loop_NTPase"/>
</dbReference>
<dbReference type="PANTHER" id="PTHR45690">
    <property type="entry name" value="NACHT, LRR AND PYD DOMAINS-CONTAINING PROTEIN 12"/>
    <property type="match status" value="1"/>
</dbReference>
<dbReference type="PANTHER" id="PTHR45690:SF1">
    <property type="entry name" value="NACHT, LRR AND PYD DOMAINS-CONTAINING PROTEIN 6"/>
    <property type="match status" value="1"/>
</dbReference>
<dbReference type="Pfam" id="PF05729">
    <property type="entry name" value="NACHT"/>
    <property type="match status" value="1"/>
</dbReference>
<dbReference type="Pfam" id="PF17776">
    <property type="entry name" value="NLRC4_HD2"/>
    <property type="match status" value="1"/>
</dbReference>
<dbReference type="Pfam" id="PF17779">
    <property type="entry name" value="NOD2_WH"/>
    <property type="match status" value="1"/>
</dbReference>
<dbReference type="Pfam" id="PF02758">
    <property type="entry name" value="PYRIN"/>
    <property type="match status" value="1"/>
</dbReference>
<dbReference type="SMART" id="SM00368">
    <property type="entry name" value="LRR_RI"/>
    <property type="match status" value="3"/>
</dbReference>
<dbReference type="SMART" id="SM01289">
    <property type="entry name" value="PYRIN"/>
    <property type="match status" value="1"/>
</dbReference>
<dbReference type="SUPFAM" id="SSF47986">
    <property type="entry name" value="DEATH domain"/>
    <property type="match status" value="1"/>
</dbReference>
<dbReference type="SUPFAM" id="SSF52540">
    <property type="entry name" value="P-loop containing nucleoside triphosphate hydrolases"/>
    <property type="match status" value="1"/>
</dbReference>
<dbReference type="SUPFAM" id="SSF52047">
    <property type="entry name" value="RNI-like"/>
    <property type="match status" value="1"/>
</dbReference>
<dbReference type="PROSITE" id="PS50824">
    <property type="entry name" value="DAPIN"/>
    <property type="match status" value="1"/>
</dbReference>
<dbReference type="PROSITE" id="PS50837">
    <property type="entry name" value="NACHT"/>
    <property type="match status" value="1"/>
</dbReference>
<name>NLRP6_RAT</name>
<sequence>MDAAGASCSSSEAVARELLLAALQDLSQEQLKRFRHKLRDAPLDGRSIPWGRLEHSDAVDLTDKLIEFYAPEPAVDVTRKILKKADIRDVSLRLKEQQLQRLGSSSALLTVSEYKKKYREHVLRQHAKVKERNARSVKINKRFTKLLIAPGSGAGEDELLGTSGEPEPERARRSDTHTFNRLFRGNDDEGPRPLTVVLQGPAGIGKTMAAKKILYDWAGGKLYHSQVDFAFFMPCGELLERPGTRSLADLILEQCPDRTAPVRRILAQPHRLLFILDGADELPTLAAPEATPCRDPFEATSGLRVLSGLLSQELLPSARLLVTSRNATLGRLQGRLCSPQCAEVRGFSDKDKKKYFFKFFRDERKAERAYRFVKENETLYALCFVPFVCWIVCTVLLQQMELGRDLSRTSKTTTSVYLLFITSMLKSAGTNGPRVQGELRMLCRLAREGILKHQAQFSEKDLERLKLQGSQVQTMFLSKKELPGVLETVVTYQFIDQSFQEFLAALSYLLDAEGAPGNSAGSVQMLVNSDAGLRGHLALTTRFLFGLLSTERIRDIGNHFGCVVPGRVKQDTLRWVQGQSQPKVATVGAEKKDELKDEEAEEEEEEEEEEEEELNFGLELLYCLYETQEDDFVRQALSSLPEMVLERVRLTRMDLEVLSYCVQCCPDGQALRLVSCGLVAAKEKKKKKKSFMNRLKGSQSTGKQPPASLLRPLCEAMITQQCGLSILTLSHCKLPDAVCRDLSEALKVAPSLRELGLLQNRLTEAGLRLLSQGLAWPKCKVQTLRIQMPGLQEVIHYLVIVLQQSPVLTTLDLSGCQLPGTVVEPLCSALKHPKCGLKTLSLTSVELTENPLRELQAVKTLKPDLAIIHSKLGTHPQPLKG</sequence>
<proteinExistence type="evidence at protein level"/>
<keyword id="KW-0877">Alternative promoter usage</keyword>
<keyword id="KW-0067">ATP-binding</keyword>
<keyword id="KW-1003">Cell membrane</keyword>
<keyword id="KW-0963">Cytoplasm</keyword>
<keyword id="KW-0391">Immunity</keyword>
<keyword id="KW-1271">Inflammasome</keyword>
<keyword id="KW-0395">Inflammatory response</keyword>
<keyword id="KW-0399">Innate immunity</keyword>
<keyword id="KW-0433">Leucine-rich repeat</keyword>
<keyword id="KW-0472">Membrane</keyword>
<keyword id="KW-0547">Nucleotide-binding</keyword>
<keyword id="KW-0539">Nucleus</keyword>
<keyword id="KW-0597">Phosphoprotein</keyword>
<keyword id="KW-1185">Reference proteome</keyword>
<keyword id="KW-0677">Repeat</keyword>
<keyword id="KW-0832">Ubl conjugation</keyword>
<evidence type="ECO:0000250" key="1">
    <source>
        <dbReference type="UniProtKB" id="P59044"/>
    </source>
</evidence>
<evidence type="ECO:0000250" key="2">
    <source>
        <dbReference type="UniProtKB" id="Q91WS2"/>
    </source>
</evidence>
<evidence type="ECO:0000255" key="3">
    <source>
        <dbReference type="PROSITE-ProRule" id="PRU00061"/>
    </source>
</evidence>
<evidence type="ECO:0000255" key="4">
    <source>
        <dbReference type="PROSITE-ProRule" id="PRU00136"/>
    </source>
</evidence>
<evidence type="ECO:0000256" key="5">
    <source>
        <dbReference type="SAM" id="MobiDB-lite"/>
    </source>
</evidence>
<evidence type="ECO:0000269" key="6">
    <source>
    </source>
</evidence>
<evidence type="ECO:0000269" key="7">
    <source>
    </source>
</evidence>
<evidence type="ECO:0000269" key="8">
    <source>
    </source>
</evidence>
<evidence type="ECO:0000269" key="9">
    <source>
    </source>
</evidence>
<evidence type="ECO:0000303" key="10">
    <source>
    </source>
</evidence>
<evidence type="ECO:0000305" key="11"/>
<evidence type="ECO:0000305" key="12">
    <source>
    </source>
</evidence>
<evidence type="ECO:0000312" key="13">
    <source>
        <dbReference type="RGD" id="708549"/>
    </source>
</evidence>
<evidence type="ECO:0007744" key="14">
    <source>
    </source>
</evidence>
<accession>Q63035</accession>
<accession>A5X5C9</accession>
<accession>D3ZYC0</accession>
<accession>F1LSH2</accession>
<feature type="chain" id="PRO_0000080894" description="NACHT, LRR and PYD domains-containing protein 6">
    <location>
        <begin position="1"/>
        <end position="881"/>
    </location>
</feature>
<feature type="domain" description="Pyrin" evidence="3">
    <location>
        <begin position="1"/>
        <end position="129"/>
    </location>
</feature>
<feature type="domain" description="NACHT" evidence="4">
    <location>
        <begin position="194"/>
        <end position="510"/>
    </location>
</feature>
<feature type="repeat" description="LRR 1">
    <location>
        <begin position="459"/>
        <end position="484"/>
    </location>
</feature>
<feature type="repeat" description="LRR 2">
    <location>
        <begin position="637"/>
        <end position="660"/>
    </location>
</feature>
<feature type="repeat" description="LRR 3">
    <location>
        <begin position="749"/>
        <end position="772"/>
    </location>
</feature>
<feature type="repeat" description="LRR 4">
    <location>
        <begin position="839"/>
        <end position="863"/>
    </location>
</feature>
<feature type="region of interest" description="Disordered" evidence="5">
    <location>
        <begin position="154"/>
        <end position="175"/>
    </location>
</feature>
<feature type="region of interest" description="Disordered" evidence="5">
    <location>
        <begin position="579"/>
        <end position="611"/>
    </location>
</feature>
<feature type="compositionally biased region" description="Acidic residues" evidence="5">
    <location>
        <begin position="596"/>
        <end position="611"/>
    </location>
</feature>
<feature type="binding site" evidence="4">
    <location>
        <begin position="200"/>
        <end position="207"/>
    </location>
    <ligand>
        <name>ATP</name>
        <dbReference type="ChEBI" id="CHEBI:30616"/>
    </ligand>
</feature>
<feature type="modified residue" description="Phosphoserine" evidence="14">
    <location>
        <position position="104"/>
    </location>
</feature>
<feature type="splice variant" id="VSP_042302" description="In isoform 2." evidence="10">
    <location>
        <begin position="1"/>
        <end position="423"/>
    </location>
</feature>
<feature type="sequence variant" description="In salt-sensitive hypertension." evidence="6">
    <original>N</original>
    <variation>S</variation>
    <location>
        <position position="518"/>
    </location>
</feature>
<feature type="sequence variant" description="In salt-sensitive hypertension." evidence="6">
    <original>C</original>
    <variation>R</variation>
    <location>
        <position position="562"/>
    </location>
</feature>
<feature type="sequence conflict" description="In Ref. 1; ABG66707." evidence="11" ref="1">
    <original>S</original>
    <variation>A</variation>
    <location>
        <position position="317"/>
    </location>
</feature>
<feature type="sequence conflict" description="In Ref. 3; AAA03623." evidence="11" ref="3">
    <original>Q</original>
    <variation>KLQ</variation>
    <location>
        <position position="468"/>
    </location>
</feature>
<feature type="sequence conflict" description="In Ref. 1; ABG66707 and 3; AAA03623." evidence="11" ref="1 3">
    <original>V</original>
    <variation>L</variation>
    <location>
        <position position="527"/>
    </location>
</feature>
<feature type="sequence conflict" description="In Ref. 1; ABG66707 and 3; AAA03623." evidence="11" ref="1 3">
    <location>
        <position position="613"/>
    </location>
</feature>
<reference key="1">
    <citation type="journal article" date="2008" name="Physiol. Genomics">
        <title>Overlapping genes in Nalp6/PYPAF5 locus encode two V2-type vasopressin isoreceptors: angiotensin-vasopressin receptor (AVR) and non-AVR.</title>
        <authorList>
            <person name="Herrera V.L."/>
            <person name="Bagamasbad P."/>
            <person name="Didishvili T."/>
            <person name="Decano J.L."/>
            <person name="Ruiz-Opazo N."/>
        </authorList>
    </citation>
    <scope>NUCLEOTIDE SEQUENCE [MRNA] (ISOFORM 1)</scope>
    <scope>SUBCELLULAR LOCATION</scope>
    <scope>TISSUE SPECIFICITY</scope>
    <scope>ALTERNATIVE PROMOTER USAGE (ISOFORM 2)</scope>
    <source>
        <strain>SR</strain>
    </source>
</reference>
<reference key="2">
    <citation type="journal article" date="2004" name="Nature">
        <title>Genome sequence of the Brown Norway rat yields insights into mammalian evolution.</title>
        <authorList>
            <person name="Gibbs R.A."/>
            <person name="Weinstock G.M."/>
            <person name="Metzker M.L."/>
            <person name="Muzny D.M."/>
            <person name="Sodergren E.J."/>
            <person name="Scherer S."/>
            <person name="Scott G."/>
            <person name="Steffen D."/>
            <person name="Worley K.C."/>
            <person name="Burch P.E."/>
            <person name="Okwuonu G."/>
            <person name="Hines S."/>
            <person name="Lewis L."/>
            <person name="Deramo C."/>
            <person name="Delgado O."/>
            <person name="Dugan-Rocha S."/>
            <person name="Miner G."/>
            <person name="Morgan M."/>
            <person name="Hawes A."/>
            <person name="Gill R."/>
            <person name="Holt R.A."/>
            <person name="Adams M.D."/>
            <person name="Amanatides P.G."/>
            <person name="Baden-Tillson H."/>
            <person name="Barnstead M."/>
            <person name="Chin S."/>
            <person name="Evans C.A."/>
            <person name="Ferriera S."/>
            <person name="Fosler C."/>
            <person name="Glodek A."/>
            <person name="Gu Z."/>
            <person name="Jennings D."/>
            <person name="Kraft C.L."/>
            <person name="Nguyen T."/>
            <person name="Pfannkoch C.M."/>
            <person name="Sitter C."/>
            <person name="Sutton G.G."/>
            <person name="Venter J.C."/>
            <person name="Woodage T."/>
            <person name="Smith D."/>
            <person name="Lee H.-M."/>
            <person name="Gustafson E."/>
            <person name="Cahill P."/>
            <person name="Kana A."/>
            <person name="Doucette-Stamm L."/>
            <person name="Weinstock K."/>
            <person name="Fechtel K."/>
            <person name="Weiss R.B."/>
            <person name="Dunn D.M."/>
            <person name="Green E.D."/>
            <person name="Blakesley R.W."/>
            <person name="Bouffard G.G."/>
            <person name="De Jong P.J."/>
            <person name="Osoegawa K."/>
            <person name="Zhu B."/>
            <person name="Marra M."/>
            <person name="Schein J."/>
            <person name="Bosdet I."/>
            <person name="Fjell C."/>
            <person name="Jones S."/>
            <person name="Krzywinski M."/>
            <person name="Mathewson C."/>
            <person name="Siddiqui A."/>
            <person name="Wye N."/>
            <person name="McPherson J."/>
            <person name="Zhao S."/>
            <person name="Fraser C.M."/>
            <person name="Shetty J."/>
            <person name="Shatsman S."/>
            <person name="Geer K."/>
            <person name="Chen Y."/>
            <person name="Abramzon S."/>
            <person name="Nierman W.C."/>
            <person name="Havlak P.H."/>
            <person name="Chen R."/>
            <person name="Durbin K.J."/>
            <person name="Egan A."/>
            <person name="Ren Y."/>
            <person name="Song X.-Z."/>
            <person name="Li B."/>
            <person name="Liu Y."/>
            <person name="Qin X."/>
            <person name="Cawley S."/>
            <person name="Cooney A.J."/>
            <person name="D'Souza L.M."/>
            <person name="Martin K."/>
            <person name="Wu J.Q."/>
            <person name="Gonzalez-Garay M.L."/>
            <person name="Jackson A.R."/>
            <person name="Kalafus K.J."/>
            <person name="McLeod M.P."/>
            <person name="Milosavljevic A."/>
            <person name="Virk D."/>
            <person name="Volkov A."/>
            <person name="Wheeler D.A."/>
            <person name="Zhang Z."/>
            <person name="Bailey J.A."/>
            <person name="Eichler E.E."/>
            <person name="Tuzun E."/>
            <person name="Birney E."/>
            <person name="Mongin E."/>
            <person name="Ureta-Vidal A."/>
            <person name="Woodwark C."/>
            <person name="Zdobnov E."/>
            <person name="Bork P."/>
            <person name="Suyama M."/>
            <person name="Torrents D."/>
            <person name="Alexandersson M."/>
            <person name="Trask B.J."/>
            <person name="Young J.M."/>
            <person name="Huang H."/>
            <person name="Wang H."/>
            <person name="Xing H."/>
            <person name="Daniels S."/>
            <person name="Gietzen D."/>
            <person name="Schmidt J."/>
            <person name="Stevens K."/>
            <person name="Vitt U."/>
            <person name="Wingrove J."/>
            <person name="Camara F."/>
            <person name="Mar Alba M."/>
            <person name="Abril J.F."/>
            <person name="Guigo R."/>
            <person name="Smit A."/>
            <person name="Dubchak I."/>
            <person name="Rubin E.M."/>
            <person name="Couronne O."/>
            <person name="Poliakov A."/>
            <person name="Huebner N."/>
            <person name="Ganten D."/>
            <person name="Goesele C."/>
            <person name="Hummel O."/>
            <person name="Kreitler T."/>
            <person name="Lee Y.-A."/>
            <person name="Monti J."/>
            <person name="Schulz H."/>
            <person name="Zimdahl H."/>
            <person name="Himmelbauer H."/>
            <person name="Lehrach H."/>
            <person name="Jacob H.J."/>
            <person name="Bromberg S."/>
            <person name="Gullings-Handley J."/>
            <person name="Jensen-Seaman M.I."/>
            <person name="Kwitek A.E."/>
            <person name="Lazar J."/>
            <person name="Pasko D."/>
            <person name="Tonellato P.J."/>
            <person name="Twigger S."/>
            <person name="Ponting C.P."/>
            <person name="Duarte J.M."/>
            <person name="Rice S."/>
            <person name="Goodstadt L."/>
            <person name="Beatson S.A."/>
            <person name="Emes R.D."/>
            <person name="Winter E.E."/>
            <person name="Webber C."/>
            <person name="Brandt P."/>
            <person name="Nyakatura G."/>
            <person name="Adetobi M."/>
            <person name="Chiaromonte F."/>
            <person name="Elnitski L."/>
            <person name="Eswara P."/>
            <person name="Hardison R.C."/>
            <person name="Hou M."/>
            <person name="Kolbe D."/>
            <person name="Makova K."/>
            <person name="Miller W."/>
            <person name="Nekrutenko A."/>
            <person name="Riemer C."/>
            <person name="Schwartz S."/>
            <person name="Taylor J."/>
            <person name="Yang S."/>
            <person name="Zhang Y."/>
            <person name="Lindpaintner K."/>
            <person name="Andrews T.D."/>
            <person name="Caccamo M."/>
            <person name="Clamp M."/>
            <person name="Clarke L."/>
            <person name="Curwen V."/>
            <person name="Durbin R.M."/>
            <person name="Eyras E."/>
            <person name="Searle S.M."/>
            <person name="Cooper G.M."/>
            <person name="Batzoglou S."/>
            <person name="Brudno M."/>
            <person name="Sidow A."/>
            <person name="Stone E.A."/>
            <person name="Payseur B.A."/>
            <person name="Bourque G."/>
            <person name="Lopez-Otin C."/>
            <person name="Puente X.S."/>
            <person name="Chakrabarti K."/>
            <person name="Chatterji S."/>
            <person name="Dewey C."/>
            <person name="Pachter L."/>
            <person name="Bray N."/>
            <person name="Yap V.B."/>
            <person name="Caspi A."/>
            <person name="Tesler G."/>
            <person name="Pevzner P.A."/>
            <person name="Haussler D."/>
            <person name="Roskin K.M."/>
            <person name="Baertsch R."/>
            <person name="Clawson H."/>
            <person name="Furey T.S."/>
            <person name="Hinrichs A.S."/>
            <person name="Karolchik D."/>
            <person name="Kent W.J."/>
            <person name="Rosenbloom K.R."/>
            <person name="Trumbower H."/>
            <person name="Weirauch M."/>
            <person name="Cooper D.N."/>
            <person name="Stenson P.D."/>
            <person name="Ma B."/>
            <person name="Brent M."/>
            <person name="Arumugam M."/>
            <person name="Shteynberg D."/>
            <person name="Copley R.R."/>
            <person name="Taylor M.S."/>
            <person name="Riethman H."/>
            <person name="Mudunuri U."/>
            <person name="Peterson J."/>
            <person name="Guyer M."/>
            <person name="Felsenfeld A."/>
            <person name="Old S."/>
            <person name="Mockrin S."/>
            <person name="Collins F.S."/>
        </authorList>
    </citation>
    <scope>NUCLEOTIDE SEQUENCE [LARGE SCALE GENOMIC DNA]</scope>
    <source>
        <strain>Brown Norway</strain>
    </source>
</reference>
<reference key="3">
    <citation type="journal article" date="1995" name="Nat. Med.">
        <title>Identification of a novel dual angiotensin II/vasopressin receptor on the basis of molecular recognition theory.</title>
        <authorList>
            <person name="Ruiz-Opazo N."/>
            <person name="Akimoto K."/>
            <person name="Herrera V.L.M."/>
        </authorList>
    </citation>
    <scope>NUCLEOTIDE SEQUENCE [MRNA] OF 370-881</scope>
    <scope>TISSUE SPECIFICITY</scope>
    <source>
        <tissue>Kidney</tissue>
    </source>
</reference>
<reference key="4">
    <citation type="journal article" date="2011" name="Am. J. Physiol.">
        <title>Developmental control of the Nlrp6 inflammasome and a substrate, IL-18, in mammalian intestine.</title>
        <authorList>
            <person name="Kempster S.L."/>
            <person name="Belteki G."/>
            <person name="Forhead A.J."/>
            <person name="Fowden A.L."/>
            <person name="Catalano R.D."/>
            <person name="Lam B.Y."/>
            <person name="McFarlane I."/>
            <person name="Charnock-Jones D.S."/>
            <person name="Smith G.C."/>
        </authorList>
    </citation>
    <scope>DEVELOPMENTAL STAGE</scope>
</reference>
<reference key="5">
    <citation type="journal article" date="2012" name="Nat. Commun.">
        <title>Quantitative maps of protein phosphorylation sites across 14 different rat organs and tissues.</title>
        <authorList>
            <person name="Lundby A."/>
            <person name="Secher A."/>
            <person name="Lage K."/>
            <person name="Nordsborg N.B."/>
            <person name="Dmytriyev A."/>
            <person name="Lundby C."/>
            <person name="Olsen J.V."/>
        </authorList>
    </citation>
    <scope>PHOSPHORYLATION [LARGE SCALE ANALYSIS] AT SER-104</scope>
    <scope>IDENTIFICATION BY MASS SPECTROMETRY [LARGE SCALE ANALYSIS]</scope>
</reference>
<reference key="6">
    <citation type="journal article" date="2002" name="Mol. Med.">
        <title>The dual AngII/AVP receptor gene N119S/C163R variant exhibits sodium-induced dysfunction and cosegregates with salt-sensitive hypertension in the Dahl salt-sensitive hypertensive rat model.</title>
        <authorList>
            <person name="Ruiz-Opazo N."/>
            <person name="Lopez L.V."/>
            <person name="Herrera V.L.M."/>
        </authorList>
    </citation>
    <scope>VARIANTS SALT-SENSITIVE HYPERTENSION SER-518 AND ARG-562</scope>
</reference>
<reference key="7">
    <citation type="journal article" date="2003" name="FEBS Lett.">
        <title>Identification of mammalian orthologs associates PYPAF5 with distinct functional roles.</title>
        <authorList>
            <person name="Albrecht M."/>
            <person name="Domingues F.S."/>
            <person name="Schreiber S."/>
            <person name="Lengauer T."/>
        </authorList>
    </citation>
    <scope>IDENTIFICATION OF MAMMALIAN ORTHOLOGS OF PYPAF5</scope>
</reference>
<organism>
    <name type="scientific">Rattus norvegicus</name>
    <name type="common">Rat</name>
    <dbReference type="NCBI Taxonomy" id="10116"/>
    <lineage>
        <taxon>Eukaryota</taxon>
        <taxon>Metazoa</taxon>
        <taxon>Chordata</taxon>
        <taxon>Craniata</taxon>
        <taxon>Vertebrata</taxon>
        <taxon>Euteleostomi</taxon>
        <taxon>Mammalia</taxon>
        <taxon>Eutheria</taxon>
        <taxon>Euarchontoglires</taxon>
        <taxon>Glires</taxon>
        <taxon>Rodentia</taxon>
        <taxon>Myomorpha</taxon>
        <taxon>Muroidea</taxon>
        <taxon>Muridae</taxon>
        <taxon>Murinae</taxon>
        <taxon>Rattus</taxon>
    </lineage>
</organism>
<gene>
    <name evidence="13" type="primary">Nlrp6</name>
    <name evidence="10" type="synonym">Nalp6</name>
    <name type="synonym">Navr</name>
    <name evidence="10" type="synonym">Pypaf5</name>
</gene>
<comment type="function">
    <text evidence="1 2">Acts as the sensor component of the NLRP6 inflammasome, which mediates inflammasome activation in response to various pathogen-associated signals, leading to maturation and secretion of IL1B and IL18. Inflammasomes are supramolecular complexes that assemble in the cytosol in response to pathogens and other damage-associated signals and play critical roles in innate immunity and inflammation. Acts as a recognition receptor (PRR): recognizes and binds specific pathogens and other damage-associated signals, such as lipoteichoic acid (LTA), a cell-wall component of Gram-positive bacteria, or double stranded RNA (dsRNA). May also recognize and bind lipopolysaccharide (LPS), a major component of the outer membrane of Gram-negative bacteria; however, LPS is probably not a major activator of the NLRP6 inflammasome. Following LTA- or dsRNA-binding, NLRP6 undergoes liquid-liquid phase separation (LLPS), enhancing multivalent interactions, an essential step for the formation of the NLRP6 inflammasome polymeric complex. The NLRP6 inflammasome acts by promoting recruitment of effector pro-inflammatory caspases (CASP1 and/or CASP4) that catalyze maturation and secretion of IL1B and IL18 in the extracellular milieu. The NLRP6 inflammasome plays a central role in the maintenance of epithelial integrity and host defense against microbial infections in the intestine. Required to restrict infection against Gram-positive bacteria by recognizing lipoteichoic acid (LTA), leading to recruitment of CASP4 and CASP1, and subsequent maturation and secretion of IL1B and IL18. Involved in intestinal antiviral innate immunity together with DHX15: recognizes and binds viral dsRNA to restrict infection by enteric viruses through the interferon pathway and GSDMD-dependent release of IL18 (By similarity). Required to prevent infection by the apicomplexan parasite Cryptosporidium in enterocytes by promoting GSDMD-dependent release of IL18. The NLRP6 inflammasome may also regulate the gut microbiota composition by acting as a sensor of microbiota-associated metabolites to form a PYCARD/ASC-dependent inflammasome for downstream IL18 release and secretion of antimicrobial peptides. Essential for gut mucosal self-renewal and proliferation. Regulate mucus secretion in an inflammasome- and autophagy-dependent manner to prevent invasion by enteric bacteria,. During systemic bacterial infections, the NLRP6 inflammasome negatively regulates neutrophil recruitment and neutrophil extracellular traps (NETs) formation. May promote peripheral nerve recovery following injury via an inflammasome-independent mechanism (By similarity).</text>
</comment>
<comment type="subunit">
    <text evidence="2">Homomultimer; forms the NLRP6 inflammasome polymeric complex, a filament composed of homopolymers in response to pathogens and other damage-associated signals. The core of NLRP6 inflammasomes consists of a signal sensor component (NLRP6), an adapter (PYCARD/ASC), which recruits effector pro-inflammatory caspases (CASP1 and CASP4). Interacts (via pyrin domain) with PYCARD/ASC (via pyrin domain); interaction takes place following NLRP6 activation and formation of liquid-liquid phase separation (LLPS), initiating nucleation which greatly enhances further addition of soluble PYCARD/ASC molecules to the speck in a prion-like polymerization process. Clustered PYCARD/ASC nucleates the formation of CASP1 (or possibly CASP4) filaments through the interaction of their respective CARD domains, acting as a platform for CASP1 polymerization. CASP1 filament formation increases local enzyme concentration, resulting in trans-autocleavage and activation. Active CASP1 then processes IL1B and IL18 precursors, leading to the release of mature cytokines in the extracellular milieu and inflammatory response. Interacts with DHX15.</text>
</comment>
<comment type="subcellular location">
    <molecule>Isoform 1</molecule>
    <subcellularLocation>
        <location evidence="7">Cytoplasm</location>
    </subcellularLocation>
    <subcellularLocation>
        <location evidence="1">Inflammasome</location>
    </subcellularLocation>
    <subcellularLocation>
        <location evidence="7">Cell membrane</location>
    </subcellularLocation>
    <subcellularLocation>
        <location evidence="7">Nucleus membrane</location>
    </subcellularLocation>
</comment>
<comment type="subcellular location">
    <molecule>Isoform 2</molecule>
    <subcellularLocation>
        <location evidence="7">Cytoplasm</location>
    </subcellularLocation>
    <subcellularLocation>
        <location evidence="7">Cell membrane</location>
    </subcellularLocation>
    <text>Predominantly expressed at the cell membrane.</text>
</comment>
<comment type="alternative products">
    <event type="alternative promoter"/>
    <isoform>
        <id>Q63035-1</id>
        <name>1</name>
        <name>Non-Avr</name>
        <name evidence="10">Navr</name>
        <sequence type="displayed"/>
    </isoform>
    <isoform>
        <id>Q63035-2</id>
        <name>2</name>
        <name evidence="10">Avr</name>
        <sequence type="described" ref="VSP_042302"/>
    </isoform>
</comment>
<comment type="tissue specificity">
    <text evidence="7 9">Detected in several tissues (PubMed:7489366). Expressed in renal epithelial cells in medullary thick ascending limb of Henle, as well as in salivary gland apical epithelium (at protein level). Isoform 1 is widely expressed. Isoform 2 is primarily expressed in kidney (at protein level) (PubMed:18413781).</text>
</comment>
<comment type="developmental stage">
    <text evidence="8">Strongly up-regulated in the intestine in late gestation.</text>
</comment>
<comment type="domain">
    <text evidence="2">The poly-Lys disordered region (350-354) mediates the formation of liquid-liquid phase separation (LLPS), an essential step for nucleation and formation of the NLRP6 inflammasome complex.</text>
</comment>
<comment type="PTM">
    <text evidence="2">Polyubiquitinated with 'Lys-63'-linked chains, promoting the interaction with PYCARD/ASC and formation of the NLRP6 inflammasome. Deubiquitination by CYLD decreases the interaction with PYCARD/ASC.</text>
</comment>
<comment type="disease">
    <text evidence="12">Defects in Nlrp6 may be a cause of salt-sensitive hypertension.</text>
</comment>
<comment type="similarity">
    <text evidence="11">Belongs to the NLRP family.</text>
</comment>
<comment type="sequence caution" evidence="11">
    <conflict type="erroneous initiation">
        <sequence resource="EMBL-CDS" id="AAA03623"/>
    </conflict>
    <text>Truncated N-terminus.</text>
</comment>